<accession>A4GCK7</accession>
<organismHost>
    <name type="scientific">Aves</name>
    <dbReference type="NCBI Taxonomy" id="8782"/>
</organismHost>
<organismHost>
    <name type="scientific">Homo sapiens</name>
    <name type="common">Human</name>
    <dbReference type="NCBI Taxonomy" id="9606"/>
</organismHost>
<organismHost>
    <name type="scientific">Sus scrofa</name>
    <name type="common">Pig</name>
    <dbReference type="NCBI Taxonomy" id="9823"/>
</organismHost>
<keyword id="KW-1157">Cap snatching</keyword>
<keyword id="KW-1262">Eukaryotic host gene expression shutoff by virus</keyword>
<keyword id="KW-1191">Eukaryotic host transcription shutoff by virus</keyword>
<keyword id="KW-1190">Host gene expression shutoff by virus</keyword>
<keyword id="KW-1045">Host mitochondrion</keyword>
<keyword id="KW-1048">Host nucleus</keyword>
<keyword id="KW-0945">Host-virus interaction</keyword>
<keyword id="KW-1090">Inhibition of host innate immune response by virus</keyword>
<keyword id="KW-1097">Inhibition of host MAVS by virus</keyword>
<keyword id="KW-1113">Inhibition of host RLR pathway by virus</keyword>
<keyword id="KW-1104">Inhibition of host RNA polymerase II by virus</keyword>
<keyword id="KW-0506">mRNA capping</keyword>
<keyword id="KW-0507">mRNA processing</keyword>
<keyword id="KW-0899">Viral immunoevasion</keyword>
<keyword id="KW-1195">Viral transcription</keyword>
<keyword id="KW-0946">Virion</keyword>
<proteinExistence type="inferred from homology"/>
<feature type="chain" id="PRO_0000373040" description="Polymerase basic protein 2">
    <location>
        <begin position="1"/>
        <end position="759"/>
    </location>
</feature>
<feature type="short sequence motif" description="Nuclear localization signal" evidence="1">
    <location>
        <begin position="736"/>
        <end position="739"/>
    </location>
</feature>
<feature type="site" description="Mammalian adaptation" evidence="1">
    <location>
        <position position="627"/>
    </location>
</feature>
<comment type="function">
    <text evidence="1">Plays an essential role in transcription initiation and cap-stealing mechanism, in which cellular capped pre-mRNAs are used to generate primers for viral transcription. Recognizes and binds the 7-methylguanosine-containing cap of the target pre-RNA which is subsequently cleaved after 10-13 nucleotides by the viral protein PA. Plays a role in the initiation of the viral genome replication and modulates the activity of the ribonucleoprotein (RNP) complex. In addition, participates in the inhibition of type I interferon induction through interaction with and inhibition of the host mitochondrial antiviral signaling protein MAVS.</text>
</comment>
<comment type="subunit">
    <text evidence="1">Influenza RNA polymerase is composed of three subunits: PB1, PB2 and PA. Interacts (via N-terminus) with PB1 (via C-terminus). Interacts with nucleoprotein NP (via N-terminus). Interacts (via N-terminus) with host MAVS (via N-terminus); this interaction inhibits host innate immune response.</text>
</comment>
<comment type="subcellular location">
    <subcellularLocation>
        <location evidence="1">Virion</location>
    </subcellularLocation>
    <subcellularLocation>
        <location evidence="1">Host nucleus</location>
    </subcellularLocation>
    <subcellularLocation>
        <location evidence="1">Host mitochondrion</location>
    </subcellularLocation>
</comment>
<comment type="similarity">
    <text evidence="1">Belongs to the influenza viruses PB2 family.</text>
</comment>
<dbReference type="EMBL" id="CY020460">
    <property type="protein sequence ID" value="ABO38372.1"/>
    <property type="molecule type" value="Viral_cRNA"/>
</dbReference>
<dbReference type="BMRB" id="A4GCK7"/>
<dbReference type="SMR" id="A4GCK7"/>
<dbReference type="PRO" id="PR:A4GCK7"/>
<dbReference type="Proteomes" id="UP000008580">
    <property type="component" value="Genome"/>
</dbReference>
<dbReference type="GO" id="GO:0033650">
    <property type="term" value="C:host cell mitochondrion"/>
    <property type="evidence" value="ECO:0007669"/>
    <property type="project" value="UniProtKB-SubCell"/>
</dbReference>
<dbReference type="GO" id="GO:0042025">
    <property type="term" value="C:host cell nucleus"/>
    <property type="evidence" value="ECO:0007669"/>
    <property type="project" value="UniProtKB-SubCell"/>
</dbReference>
<dbReference type="GO" id="GO:0044423">
    <property type="term" value="C:virion component"/>
    <property type="evidence" value="ECO:0007669"/>
    <property type="project" value="UniProtKB-UniRule"/>
</dbReference>
<dbReference type="GO" id="GO:0003723">
    <property type="term" value="F:RNA binding"/>
    <property type="evidence" value="ECO:0007669"/>
    <property type="project" value="UniProtKB-UniRule"/>
</dbReference>
<dbReference type="GO" id="GO:0003968">
    <property type="term" value="F:RNA-directed RNA polymerase activity"/>
    <property type="evidence" value="ECO:0007669"/>
    <property type="project" value="UniProtKB-UniRule"/>
</dbReference>
<dbReference type="GO" id="GO:0006370">
    <property type="term" value="P:7-methylguanosine mRNA capping"/>
    <property type="evidence" value="ECO:0007669"/>
    <property type="project" value="UniProtKB-UniRule"/>
</dbReference>
<dbReference type="GO" id="GO:0075526">
    <property type="term" value="P:cap snatching"/>
    <property type="evidence" value="ECO:0007669"/>
    <property type="project" value="UniProtKB-UniRule"/>
</dbReference>
<dbReference type="GO" id="GO:0006351">
    <property type="term" value="P:DNA-templated transcription"/>
    <property type="evidence" value="ECO:0007669"/>
    <property type="project" value="UniProtKB-UniRule"/>
</dbReference>
<dbReference type="GO" id="GO:0039545">
    <property type="term" value="P:symbiont-mediated suppression of host cytoplasmic pattern recognition receptor signaling pathway via inhibition of MAVS activity"/>
    <property type="evidence" value="ECO:0007669"/>
    <property type="project" value="UniProtKB-UniRule"/>
</dbReference>
<dbReference type="GO" id="GO:0039657">
    <property type="term" value="P:symbiont-mediated suppression of host gene expression"/>
    <property type="evidence" value="ECO:0007669"/>
    <property type="project" value="UniProtKB-KW"/>
</dbReference>
<dbReference type="GO" id="GO:0039523">
    <property type="term" value="P:symbiont-mediated suppression of host mRNA transcription via inhibition of RNA polymerase II activity"/>
    <property type="evidence" value="ECO:0007669"/>
    <property type="project" value="UniProtKB-UniRule"/>
</dbReference>
<dbReference type="GO" id="GO:0039694">
    <property type="term" value="P:viral RNA genome replication"/>
    <property type="evidence" value="ECO:0007669"/>
    <property type="project" value="InterPro"/>
</dbReference>
<dbReference type="FunFam" id="3.30.30.90:FF:000001">
    <property type="entry name" value="Polymerase basic protein 2"/>
    <property type="match status" value="1"/>
</dbReference>
<dbReference type="Gene3D" id="3.30.30.90">
    <property type="entry name" value="Polymerase Basic Protein 2, C-terminal domain"/>
    <property type="match status" value="1"/>
</dbReference>
<dbReference type="HAMAP" id="MF_04062">
    <property type="entry name" value="INV_PB2"/>
    <property type="match status" value="1"/>
</dbReference>
<dbReference type="InterPro" id="IPR049110">
    <property type="entry name" value="Flu_PB2_2nd"/>
</dbReference>
<dbReference type="InterPro" id="IPR049114">
    <property type="entry name" value="Flu_PB2_6th"/>
</dbReference>
<dbReference type="InterPro" id="IPR049115">
    <property type="entry name" value="Flu_PB2_C"/>
</dbReference>
<dbReference type="InterPro" id="IPR048298">
    <property type="entry name" value="Flu_PB2_CAP-bd"/>
</dbReference>
<dbReference type="InterPro" id="IPR049111">
    <property type="entry name" value="Flu_PB2_middle"/>
</dbReference>
<dbReference type="InterPro" id="IPR049106">
    <property type="entry name" value="Flu_PB2_N"/>
</dbReference>
<dbReference type="InterPro" id="IPR001591">
    <property type="entry name" value="INV_PB2"/>
</dbReference>
<dbReference type="InterPro" id="IPR049113">
    <property type="entry name" value="PB2_helical"/>
</dbReference>
<dbReference type="InterPro" id="IPR037258">
    <property type="entry name" value="PDB2_C"/>
</dbReference>
<dbReference type="Pfam" id="PF20947">
    <property type="entry name" value="Flu_PB2_1st"/>
    <property type="match status" value="1"/>
</dbReference>
<dbReference type="Pfam" id="PF20948">
    <property type="entry name" value="Flu_PB2_2nd"/>
    <property type="match status" value="1"/>
</dbReference>
<dbReference type="Pfam" id="PF20949">
    <property type="entry name" value="Flu_PB2_3rd"/>
    <property type="match status" value="1"/>
</dbReference>
<dbReference type="Pfam" id="PF20950">
    <property type="entry name" value="Flu_PB2_4th"/>
    <property type="match status" value="1"/>
</dbReference>
<dbReference type="Pfam" id="PF00604">
    <property type="entry name" value="Flu_PB2_5th"/>
    <property type="match status" value="1"/>
</dbReference>
<dbReference type="Pfam" id="PF20951">
    <property type="entry name" value="Flu_PB2_6th"/>
    <property type="match status" value="1"/>
</dbReference>
<dbReference type="Pfam" id="PF20952">
    <property type="entry name" value="Flu_PB2_7th"/>
    <property type="match status" value="1"/>
</dbReference>
<dbReference type="SUPFAM" id="SSF160453">
    <property type="entry name" value="PB2 C-terminal domain-like"/>
    <property type="match status" value="1"/>
</dbReference>
<sequence length="759" mass="86025">MERIKELRNLMSQSRTREILTKTTVDHMAIIKKYTSGRQEKNPSLRMKWMMAMKYPITADKRITEMIPERNEQGQTLWSKMNDAGSDRVMISPLAVTWWNRNGPVTSTVHYPKIYKTYFEKVERLKHGTFGPVHFRNQVKIRRRVDINPGHADLSAKEAQDVIMEVVFPNEVGARILTSESQLTITKEKKEELQNCKISPLMVAYMLERELVRKTRFLPVAGGTSSVYIEVLHLTQGTCWEQMYTPGGEVRNDDVDQSLIIAARNIVRRAAVSADPLASLLEMCHSTQIGGTRMVDILRQNPTEEQAVDICKAAMGLRISSSFSFGGFTFKRTSGSSVKREEEVLTGNLQTLKLKVHEGYEEFTMVGKRATAILRKATRRLIQLIVSGRDEQSIVEAIVVAMVFSQEDCMIKAVRGDLNFVNRANQRLNPMHQLLRHFQKDAKVLFQNWGIEPIDNVMGMIGILPDMTPSTEMSMRGVRVSKMGVDEYSNAERVVVSIDRFLRVRDQRGNVLLSPEEVSETQGTEKLTITYSSSMMWEINGPESVLVNTYQWIIRNWETVKIQWSQNPTMLYNKMEFEPFQSLVPKAIRGQYSGFVRTLFQQMRDVLGTFDTTQIIKLLPFAAAPPKQSRMQFSSLTVNVRGSGMRILVRGNSPVFNYNKTTKRLTVLGKDAGTLTEDPDEGTAGVESAVLRGFLILGKEDRRYGPALSINELSNLAKGEKANVLIGQGDVVLVMKRKRDSSILTDSQTATKRIRMAIN</sequence>
<evidence type="ECO:0000255" key="1">
    <source>
        <dbReference type="HAMAP-Rule" id="MF_04062"/>
    </source>
</evidence>
<gene>
    <name evidence="1" type="primary">PB2</name>
</gene>
<name>PB2_I80AA</name>
<organism>
    <name type="scientific">Influenza A virus (strain A/India/6263/1980 H1N1)</name>
    <dbReference type="NCBI Taxonomy" id="393562"/>
    <lineage>
        <taxon>Viruses</taxon>
        <taxon>Riboviria</taxon>
        <taxon>Orthornavirae</taxon>
        <taxon>Negarnaviricota</taxon>
        <taxon>Polyploviricotina</taxon>
        <taxon>Insthoviricetes</taxon>
        <taxon>Articulavirales</taxon>
        <taxon>Orthomyxoviridae</taxon>
        <taxon>Alphainfluenzavirus</taxon>
        <taxon>Alphainfluenzavirus influenzae</taxon>
        <taxon>Influenza A virus</taxon>
    </lineage>
</organism>
<protein>
    <recommendedName>
        <fullName evidence="1">Polymerase basic protein 2</fullName>
    </recommendedName>
    <alternativeName>
        <fullName evidence="1">RNA-directed RNA polymerase subunit P3</fullName>
    </alternativeName>
</protein>
<reference key="1">
    <citation type="submission" date="2007-03" db="EMBL/GenBank/DDBJ databases">
        <title>The NIAID influenza genome sequencing project.</title>
        <authorList>
            <person name="Ghedin E."/>
            <person name="Spiro D."/>
            <person name="Miller N."/>
            <person name="Zaborsky J."/>
            <person name="Feldblyum T."/>
            <person name="Subbu V."/>
            <person name="Shumway M."/>
            <person name="Sparenborg J."/>
            <person name="Groveman L."/>
            <person name="Halpin R."/>
            <person name="Sitz J."/>
            <person name="Koo H."/>
            <person name="Salzberg S.L."/>
            <person name="Webster R.G."/>
            <person name="Hoffmann E."/>
            <person name="Krauss S."/>
            <person name="Naeve C."/>
            <person name="Bao Y."/>
            <person name="Bolotov P."/>
            <person name="Dernovoy D."/>
            <person name="Kiryutin B."/>
            <person name="Lipman D.J."/>
            <person name="Tatusova T."/>
        </authorList>
    </citation>
    <scope>NUCLEOTIDE SEQUENCE [GENOMIC RNA]</scope>
</reference>
<reference key="2">
    <citation type="submission" date="2007-03" db="EMBL/GenBank/DDBJ databases">
        <authorList>
            <consortium name="The NIAID Influenza Genome Sequencing Consortium"/>
        </authorList>
    </citation>
    <scope>NUCLEOTIDE SEQUENCE [GENOMIC RNA]</scope>
</reference>